<name>RL18_FRATO</name>
<proteinExistence type="inferred from homology"/>
<sequence>MDKKTARLSRSKRTRIKLRELGHTRLCVYRTPRHVYAQVISGDGSTVLVAASTVEKDVKAKCKYTGNVESAAIVGEIIADRCKEKGISQVAFDRSGYKYHGRVKALVEAAREHGLQF</sequence>
<gene>
    <name evidence="1" type="primary">rplR</name>
    <name type="ordered locus">FTH_0247</name>
</gene>
<keyword id="KW-0687">Ribonucleoprotein</keyword>
<keyword id="KW-0689">Ribosomal protein</keyword>
<keyword id="KW-0694">RNA-binding</keyword>
<keyword id="KW-0699">rRNA-binding</keyword>
<organism>
    <name type="scientific">Francisella tularensis subsp. holarctica (strain OSU18)</name>
    <dbReference type="NCBI Taxonomy" id="393011"/>
    <lineage>
        <taxon>Bacteria</taxon>
        <taxon>Pseudomonadati</taxon>
        <taxon>Pseudomonadota</taxon>
        <taxon>Gammaproteobacteria</taxon>
        <taxon>Thiotrichales</taxon>
        <taxon>Francisellaceae</taxon>
        <taxon>Francisella</taxon>
    </lineage>
</organism>
<comment type="function">
    <text evidence="1">This is one of the proteins that bind and probably mediate the attachment of the 5S RNA into the large ribosomal subunit, where it forms part of the central protuberance.</text>
</comment>
<comment type="subunit">
    <text evidence="1">Part of the 50S ribosomal subunit; part of the 5S rRNA/L5/L18/L25 subcomplex. Contacts the 5S and 23S rRNAs.</text>
</comment>
<comment type="similarity">
    <text evidence="1">Belongs to the universal ribosomal protein uL18 family.</text>
</comment>
<feature type="chain" id="PRO_1000053028" description="Large ribosomal subunit protein uL18">
    <location>
        <begin position="1"/>
        <end position="117"/>
    </location>
</feature>
<reference key="1">
    <citation type="journal article" date="2006" name="J. Bacteriol.">
        <title>Chromosome rearrangement and diversification of Francisella tularensis revealed by the type B (OSU18) genome sequence.</title>
        <authorList>
            <person name="Petrosino J.F."/>
            <person name="Xiang Q."/>
            <person name="Karpathy S.E."/>
            <person name="Jiang H."/>
            <person name="Yerrapragada S."/>
            <person name="Liu Y."/>
            <person name="Gioia J."/>
            <person name="Hemphill L."/>
            <person name="Gonzalez A."/>
            <person name="Raghavan T.M."/>
            <person name="Uzman A."/>
            <person name="Fox G.E."/>
            <person name="Highlander S."/>
            <person name="Reichard M."/>
            <person name="Morton R.J."/>
            <person name="Clinkenbeard K.D."/>
            <person name="Weinstock G.M."/>
        </authorList>
    </citation>
    <scope>NUCLEOTIDE SEQUENCE [LARGE SCALE GENOMIC DNA]</scope>
    <source>
        <strain>OSU18</strain>
    </source>
</reference>
<evidence type="ECO:0000255" key="1">
    <source>
        <dbReference type="HAMAP-Rule" id="MF_01337"/>
    </source>
</evidence>
<evidence type="ECO:0000305" key="2"/>
<protein>
    <recommendedName>
        <fullName evidence="1">Large ribosomal subunit protein uL18</fullName>
    </recommendedName>
    <alternativeName>
        <fullName evidence="2">50S ribosomal protein L18</fullName>
    </alternativeName>
</protein>
<accession>Q0BNR1</accession>
<dbReference type="EMBL" id="CP000437">
    <property type="protein sequence ID" value="ABI82273.1"/>
    <property type="molecule type" value="Genomic_DNA"/>
</dbReference>
<dbReference type="RefSeq" id="WP_003014360.1">
    <property type="nucleotide sequence ID" value="NC_017463.1"/>
</dbReference>
<dbReference type="SMR" id="Q0BNR1"/>
<dbReference type="KEGG" id="fth:FTH_0247"/>
<dbReference type="GO" id="GO:0022625">
    <property type="term" value="C:cytosolic large ribosomal subunit"/>
    <property type="evidence" value="ECO:0007669"/>
    <property type="project" value="TreeGrafter"/>
</dbReference>
<dbReference type="GO" id="GO:0008097">
    <property type="term" value="F:5S rRNA binding"/>
    <property type="evidence" value="ECO:0007669"/>
    <property type="project" value="TreeGrafter"/>
</dbReference>
<dbReference type="GO" id="GO:0003735">
    <property type="term" value="F:structural constituent of ribosome"/>
    <property type="evidence" value="ECO:0007669"/>
    <property type="project" value="InterPro"/>
</dbReference>
<dbReference type="GO" id="GO:0006412">
    <property type="term" value="P:translation"/>
    <property type="evidence" value="ECO:0007669"/>
    <property type="project" value="UniProtKB-UniRule"/>
</dbReference>
<dbReference type="CDD" id="cd00432">
    <property type="entry name" value="Ribosomal_L18_L5e"/>
    <property type="match status" value="1"/>
</dbReference>
<dbReference type="FunFam" id="3.30.420.100:FF:000001">
    <property type="entry name" value="50S ribosomal protein L18"/>
    <property type="match status" value="1"/>
</dbReference>
<dbReference type="Gene3D" id="3.30.420.100">
    <property type="match status" value="1"/>
</dbReference>
<dbReference type="HAMAP" id="MF_01337_B">
    <property type="entry name" value="Ribosomal_uL18_B"/>
    <property type="match status" value="1"/>
</dbReference>
<dbReference type="InterPro" id="IPR004389">
    <property type="entry name" value="Ribosomal_uL18_bac-type"/>
</dbReference>
<dbReference type="InterPro" id="IPR005484">
    <property type="entry name" value="Ribosomal_uL18_bac/euk"/>
</dbReference>
<dbReference type="NCBIfam" id="TIGR00060">
    <property type="entry name" value="L18_bact"/>
    <property type="match status" value="1"/>
</dbReference>
<dbReference type="PANTHER" id="PTHR12899">
    <property type="entry name" value="39S RIBOSOMAL PROTEIN L18, MITOCHONDRIAL"/>
    <property type="match status" value="1"/>
</dbReference>
<dbReference type="PANTHER" id="PTHR12899:SF3">
    <property type="entry name" value="LARGE RIBOSOMAL SUBUNIT PROTEIN UL18M"/>
    <property type="match status" value="1"/>
</dbReference>
<dbReference type="Pfam" id="PF00861">
    <property type="entry name" value="Ribosomal_L18p"/>
    <property type="match status" value="1"/>
</dbReference>
<dbReference type="SUPFAM" id="SSF53137">
    <property type="entry name" value="Translational machinery components"/>
    <property type="match status" value="1"/>
</dbReference>